<reference key="1">
    <citation type="submission" date="2008-10" db="EMBL/GenBank/DDBJ databases">
        <title>Genome sequence of Bacillus cereus B4264.</title>
        <authorList>
            <person name="Dodson R.J."/>
            <person name="Durkin A.S."/>
            <person name="Rosovitz M.J."/>
            <person name="Rasko D.A."/>
            <person name="Hoffmaster A."/>
            <person name="Ravel J."/>
            <person name="Sutton G."/>
        </authorList>
    </citation>
    <scope>NUCLEOTIDE SEQUENCE [LARGE SCALE GENOMIC DNA]</scope>
    <source>
        <strain>B4264</strain>
    </source>
</reference>
<dbReference type="EMBL" id="CP001176">
    <property type="protein sequence ID" value="ACK60800.1"/>
    <property type="molecule type" value="Genomic_DNA"/>
</dbReference>
<dbReference type="RefSeq" id="WP_000142475.1">
    <property type="nucleotide sequence ID" value="NZ_VEHB01000004.1"/>
</dbReference>
<dbReference type="KEGG" id="bcb:BCB4264_A5447"/>
<dbReference type="HOGENOM" id="CLU_096410_1_0_9"/>
<dbReference type="Proteomes" id="UP000007096">
    <property type="component" value="Chromosome"/>
</dbReference>
<dbReference type="GO" id="GO:0005886">
    <property type="term" value="C:plasma membrane"/>
    <property type="evidence" value="ECO:0007669"/>
    <property type="project" value="UniProtKB-SubCell"/>
</dbReference>
<dbReference type="GO" id="GO:0005384">
    <property type="term" value="F:manganese ion transmembrane transporter activity"/>
    <property type="evidence" value="ECO:0007669"/>
    <property type="project" value="UniProtKB-UniRule"/>
</dbReference>
<dbReference type="HAMAP" id="MF_01521">
    <property type="entry name" value="MntP_pump"/>
    <property type="match status" value="1"/>
</dbReference>
<dbReference type="InterPro" id="IPR003810">
    <property type="entry name" value="Mntp/YtaF"/>
</dbReference>
<dbReference type="InterPro" id="IPR022929">
    <property type="entry name" value="Put_MntP"/>
</dbReference>
<dbReference type="PANTHER" id="PTHR35529">
    <property type="entry name" value="MANGANESE EFFLUX PUMP MNTP-RELATED"/>
    <property type="match status" value="1"/>
</dbReference>
<dbReference type="PANTHER" id="PTHR35529:SF1">
    <property type="entry name" value="MANGANESE EFFLUX PUMP MNTP-RELATED"/>
    <property type="match status" value="1"/>
</dbReference>
<dbReference type="Pfam" id="PF02659">
    <property type="entry name" value="Mntp"/>
    <property type="match status" value="1"/>
</dbReference>
<accession>B7HFM2</accession>
<protein>
    <recommendedName>
        <fullName evidence="1">Putative manganese efflux pump MntP</fullName>
    </recommendedName>
</protein>
<proteinExistence type="inferred from homology"/>
<keyword id="KW-1003">Cell membrane</keyword>
<keyword id="KW-0406">Ion transport</keyword>
<keyword id="KW-0464">Manganese</keyword>
<keyword id="KW-0472">Membrane</keyword>
<keyword id="KW-0812">Transmembrane</keyword>
<keyword id="KW-1133">Transmembrane helix</keyword>
<keyword id="KW-0813">Transport</keyword>
<name>MNTP_BACC4</name>
<organism>
    <name type="scientific">Bacillus cereus (strain B4264)</name>
    <dbReference type="NCBI Taxonomy" id="405532"/>
    <lineage>
        <taxon>Bacteria</taxon>
        <taxon>Bacillati</taxon>
        <taxon>Bacillota</taxon>
        <taxon>Bacilli</taxon>
        <taxon>Bacillales</taxon>
        <taxon>Bacillaceae</taxon>
        <taxon>Bacillus</taxon>
        <taxon>Bacillus cereus group</taxon>
    </lineage>
</organism>
<evidence type="ECO:0000255" key="1">
    <source>
        <dbReference type="HAMAP-Rule" id="MF_01521"/>
    </source>
</evidence>
<gene>
    <name evidence="1" type="primary">mntP</name>
    <name type="ordered locus">BCB4264_A5447</name>
</gene>
<feature type="chain" id="PRO_1000200011" description="Putative manganese efflux pump MntP">
    <location>
        <begin position="1"/>
        <end position="182"/>
    </location>
</feature>
<feature type="transmembrane region" description="Helical" evidence="1">
    <location>
        <begin position="6"/>
        <end position="26"/>
    </location>
</feature>
<feature type="transmembrane region" description="Helical" evidence="1">
    <location>
        <begin position="37"/>
        <end position="57"/>
    </location>
</feature>
<feature type="transmembrane region" description="Helical" evidence="1">
    <location>
        <begin position="71"/>
        <end position="91"/>
    </location>
</feature>
<feature type="transmembrane region" description="Helical" evidence="1">
    <location>
        <begin position="101"/>
        <end position="121"/>
    </location>
</feature>
<feature type="transmembrane region" description="Helical" evidence="1">
    <location>
        <begin position="131"/>
        <end position="151"/>
    </location>
</feature>
<feature type="transmembrane region" description="Helical" evidence="1">
    <location>
        <begin position="162"/>
        <end position="182"/>
    </location>
</feature>
<sequence length="182" mass="19787">MTFEQLIPLIIMAFALGMDAFSVSLGMGMMPLKLRQILYIGMTIGIFHIIMPFIGMVLGRFLSEKYGDIAHFAGAILLIGLGFYIVYSTILQNEETRTAPIGISLFVFAFGVSIDSFSVGLSLGIYGAQTIITILLFGFVSMLLAWIGLLIGRHAKDMLGTYGEIVGGIILVGFGLYILFPI</sequence>
<comment type="function">
    <text evidence="1">Probably functions as a manganese efflux pump.</text>
</comment>
<comment type="subcellular location">
    <subcellularLocation>
        <location evidence="1">Cell membrane</location>
        <topology evidence="1">Multi-pass membrane protein</topology>
    </subcellularLocation>
</comment>
<comment type="similarity">
    <text evidence="1">Belongs to the MntP (TC 9.B.29) family.</text>
</comment>